<reference key="1">
    <citation type="journal article" date="1993" name="Mol. Biochem. Parasitol.">
        <title>Circumsporozoite protein gene of Plasmodium simium, a Plasmodium vivax-like monkey malaria parasite.</title>
        <authorList>
            <person name="Goldman I.F."/>
            <person name="Qari S.H."/>
            <person name="Millet P.G."/>
            <person name="Collins W.E."/>
            <person name="Lal A.A."/>
        </authorList>
    </citation>
    <scope>NUCLEOTIDE SEQUENCE [GENOMIC DNA]</scope>
    <scope>POLYMORPHISM</scope>
    <scope>REPEATS</scope>
</reference>
<dbReference type="EMBL" id="L05068">
    <property type="protein sequence ID" value="AAA29525.1"/>
    <property type="molecule type" value="Genomic_DNA"/>
</dbReference>
<dbReference type="PIR" id="A48571">
    <property type="entry name" value="A48571"/>
</dbReference>
<dbReference type="SMR" id="Q03110"/>
<dbReference type="GlyCosmos" id="Q03110">
    <property type="glycosylation" value="1 site, No reported glycans"/>
</dbReference>
<dbReference type="GO" id="GO:0009986">
    <property type="term" value="C:cell surface"/>
    <property type="evidence" value="ECO:0007669"/>
    <property type="project" value="InterPro"/>
</dbReference>
<dbReference type="GO" id="GO:0005737">
    <property type="term" value="C:cytoplasm"/>
    <property type="evidence" value="ECO:0007669"/>
    <property type="project" value="UniProtKB-SubCell"/>
</dbReference>
<dbReference type="GO" id="GO:0005886">
    <property type="term" value="C:plasma membrane"/>
    <property type="evidence" value="ECO:0007669"/>
    <property type="project" value="UniProtKB-SubCell"/>
</dbReference>
<dbReference type="GO" id="GO:0098552">
    <property type="term" value="C:side of membrane"/>
    <property type="evidence" value="ECO:0007669"/>
    <property type="project" value="UniProtKB-KW"/>
</dbReference>
<dbReference type="Gene3D" id="2.20.100.10">
    <property type="entry name" value="Thrombospondin type-1 (TSP1) repeat"/>
    <property type="match status" value="1"/>
</dbReference>
<dbReference type="InterPro" id="IPR003067">
    <property type="entry name" value="Crcmsprzoite"/>
</dbReference>
<dbReference type="InterPro" id="IPR000884">
    <property type="entry name" value="TSP1_rpt"/>
</dbReference>
<dbReference type="InterPro" id="IPR036383">
    <property type="entry name" value="TSP1_rpt_sf"/>
</dbReference>
<dbReference type="Pfam" id="PF00090">
    <property type="entry name" value="TSP_1"/>
    <property type="match status" value="1"/>
</dbReference>
<dbReference type="PRINTS" id="PR01303">
    <property type="entry name" value="CRCMSPRZOITE"/>
</dbReference>
<dbReference type="SMART" id="SM00209">
    <property type="entry name" value="TSP1"/>
    <property type="match status" value="1"/>
</dbReference>
<dbReference type="SUPFAM" id="SSF82895">
    <property type="entry name" value="TSP-1 type 1 repeat"/>
    <property type="match status" value="1"/>
</dbReference>
<dbReference type="PROSITE" id="PS50092">
    <property type="entry name" value="TSP1"/>
    <property type="match status" value="1"/>
</dbReference>
<feature type="signal peptide" evidence="5">
    <location>
        <begin position="1"/>
        <end position="22"/>
    </location>
</feature>
<feature type="chain" id="PRO_0000024534" description="Circumsporozoite protein" evidence="5">
    <location>
        <begin position="23"/>
        <end position="363"/>
    </location>
</feature>
<feature type="chain" id="PRO_0000455503" description="Circumsporozoite protein C-terminus" evidence="3">
    <location>
        <begin status="unknown"/>
        <end position="363"/>
    </location>
</feature>
<feature type="propeptide" id="PRO_0000455504" description="Removed in mature form" evidence="5">
    <location>
        <begin position="364"/>
        <end position="386"/>
    </location>
</feature>
<feature type="repeat" description="1" evidence="11">
    <location>
        <begin position="96"/>
        <end position="104"/>
    </location>
</feature>
<feature type="repeat" description="2" evidence="11">
    <location>
        <begin position="105"/>
        <end position="113"/>
    </location>
</feature>
<feature type="repeat" description="3" evidence="11">
    <location>
        <begin position="114"/>
        <end position="122"/>
    </location>
</feature>
<feature type="repeat" description="4" evidence="11">
    <location>
        <begin position="123"/>
        <end position="131"/>
    </location>
</feature>
<feature type="repeat" description="5" evidence="11">
    <location>
        <begin position="132"/>
        <end position="140"/>
    </location>
</feature>
<feature type="repeat" description="6" evidence="11">
    <location>
        <begin position="141"/>
        <end position="149"/>
    </location>
</feature>
<feature type="repeat" description="7" evidence="11">
    <location>
        <begin position="150"/>
        <end position="158"/>
    </location>
</feature>
<feature type="repeat" description="8" evidence="11">
    <location>
        <begin position="159"/>
        <end position="167"/>
    </location>
</feature>
<feature type="repeat" description="9" evidence="11">
    <location>
        <begin position="168"/>
        <end position="176"/>
    </location>
</feature>
<feature type="repeat" description="10" evidence="11">
    <location>
        <begin position="177"/>
        <end position="185"/>
    </location>
</feature>
<feature type="repeat" description="11" evidence="11">
    <location>
        <begin position="186"/>
        <end position="194"/>
    </location>
</feature>
<feature type="repeat" description="12" evidence="11">
    <location>
        <begin position="195"/>
        <end position="203"/>
    </location>
</feature>
<feature type="repeat" description="13" evidence="11">
    <location>
        <begin position="204"/>
        <end position="212"/>
    </location>
</feature>
<feature type="repeat" description="14" evidence="11">
    <location>
        <begin position="213"/>
        <end position="221"/>
    </location>
</feature>
<feature type="repeat" description="15" evidence="11">
    <location>
        <begin position="222"/>
        <end position="230"/>
    </location>
</feature>
<feature type="repeat" description="16" evidence="11">
    <location>
        <begin position="231"/>
        <end position="239"/>
    </location>
</feature>
<feature type="repeat" description="17" evidence="11">
    <location>
        <begin position="240"/>
        <end position="248"/>
    </location>
</feature>
<feature type="repeat" description="18" evidence="11">
    <location>
        <begin position="249"/>
        <end position="257"/>
    </location>
</feature>
<feature type="repeat" description="19" evidence="11">
    <location>
        <begin position="258"/>
        <end position="266"/>
    </location>
</feature>
<feature type="repeat" description="20" evidence="11">
    <location>
        <begin position="267"/>
        <end position="275"/>
    </location>
</feature>
<feature type="domain" description="TSP type-1" evidence="6">
    <location>
        <begin position="312"/>
        <end position="364"/>
    </location>
</feature>
<feature type="region of interest" description="Disordered" evidence="7">
    <location>
        <begin position="51"/>
        <end position="304"/>
    </location>
</feature>
<feature type="region of interest" description="Required for the binding to heparan sulfate proteoglycans (HSPGs) on the surface of host hepatocytes" evidence="4">
    <location>
        <begin position="80"/>
        <end position="88"/>
    </location>
</feature>
<feature type="region of interest" description="Region I; contains the proteolytic cleavage site" evidence="3">
    <location>
        <begin position="91"/>
        <end position="95"/>
    </location>
</feature>
<feature type="region of interest" description="20 X 9 AA tandem repeats of G-D-R-A-[AD]-G-Q-P-A" evidence="11">
    <location>
        <begin position="96"/>
        <end position="275"/>
    </location>
</feature>
<feature type="compositionally biased region" description="Basic and acidic residues" evidence="7">
    <location>
        <begin position="72"/>
        <end position="100"/>
    </location>
</feature>
<feature type="compositionally biased region" description="Gly residues" evidence="7">
    <location>
        <begin position="275"/>
        <end position="292"/>
    </location>
</feature>
<feature type="compositionally biased region" description="Low complexity" evidence="7">
    <location>
        <begin position="293"/>
        <end position="303"/>
    </location>
</feature>
<feature type="lipid moiety-binding region" description="GPI-anchor amidated cysteine" evidence="5">
    <location>
        <position position="363"/>
    </location>
</feature>
<feature type="glycosylation site" description="O-linked (Fuc) threonine" evidence="2">
    <location>
        <position position="327"/>
    </location>
</feature>
<feature type="disulfide bond" evidence="4">
    <location>
        <begin position="324"/>
        <end position="358"/>
    </location>
</feature>
<feature type="disulfide bond" evidence="4">
    <location>
        <begin position="328"/>
        <end position="363"/>
    </location>
</feature>
<comment type="function">
    <text evidence="1 3">Essential sporozoite protein (By similarity). In the mosquito vector, required for sporozoite development in the oocyst, migration through the vector hemolymph and entry into the vector salivary glands (By similarity). In the vertebrate host, required for sporozoite migration through the host dermis and infection of host hepatocytes (By similarity). Binds to highly sulfated heparan sulfate proteoglycans (HSPGs) on the surface of host hepatocytes (By similarity).</text>
</comment>
<comment type="function">
    <molecule>Circumsporozoite protein C-terminus</molecule>
    <text evidence="3">In the vertebrate host, binds to highly sulfated heparan sulfate proteoglycans (HSPGs) on the surface of host hepatocytes and is required for sporozoite invasion of the host hepatocytes.</text>
</comment>
<comment type="subcellular location">
    <subcellularLocation>
        <location evidence="2">Cell membrane</location>
        <topology evidence="5">Lipid-anchor</topology>
        <topology evidence="5">GPI-anchor</topology>
    </subcellularLocation>
    <subcellularLocation>
        <location evidence="3">Cytoplasm</location>
    </subcellularLocation>
    <text evidence="3">Localizes to the cytoplasm and the cell membrane in oocysts at day 6 post infection and then gradually distributes over the entire cell surface of the sporoblast and the budding sporozoites.</text>
</comment>
<comment type="domain">
    <text evidence="3 4">The N-terminus is involved in the initial binding to heparan sulfate proteoglycans (HSPGs) on the surface of host hepatocytes (By similarity). The N-terminus masks the TSP type-1 (TSR) domain which maintains the sporozoites in a migratory state, enabling them to complete their journey to the salivary gland in the mosquito vector and then to the host liver. The unmasking of the TSP type-1 (TSR) domain when the sporozoite interacts with the host hepatocyte also protects sporozoites from host antibodies (By similarity).</text>
</comment>
<comment type="domain">
    <text evidence="3">The TSP type-1 (TSR) domain is required for sporozoite development and invasion. CSP has two conformational states, an adhesive conformation in which the TSP type-1 (TSR) domain is exposed and a nonadhesive conformation in which the TSR is masked by the N-terminus. TSR-exposed conformation occurs during sporozoite development in the oocyst in the mosquito vector and during host hepatocyte invasion. TSR-masked conformation occurs during sporozoite migration through the hemolymph to salivary glands in the mosquito vector and in the host dermis.</text>
</comment>
<comment type="domain">
    <text evidence="3">The GPI-anchor is essential for cell membrane localization and for sporozoite formation inside the oocyst.</text>
</comment>
<comment type="PTM">
    <text evidence="1 3">During host cell invasion, proteolytically cleaved at the cell membrane in the region I by a papain-like cysteine protease of parasite origin (By similarity). Cleavage is triggered by the sporozoite contact with highly sulfated heparan sulfate proteoglycans (HSPGs) present on the host hepatocyte cell surface (By similarity). Cleavage exposes the TSP type-1 (TSR) domain and is required for productive invasion of host hepatocytes but not for adhesion to the host cell membrane (By similarity). Cleavage is dispensable for sporozoite development in the oocyst, motility and for traversal of host and vector cells (By similarity).</text>
</comment>
<comment type="PTM">
    <text evidence="2">O-glycosylated; maybe by POFUT2.</text>
</comment>
<comment type="polymorphism">
    <text evidence="8">The sequence of the repeats varies across Plasmodium species and strains.</text>
</comment>
<comment type="similarity">
    <text evidence="10">Belongs to the plasmodium circumsporozoite protein family.</text>
</comment>
<gene>
    <name evidence="3" type="primary">CSP</name>
</gene>
<accession>Q03110</accession>
<name>CSP_PLASI</name>
<sequence>MKNFILLAVSSILLVDLFPTHCGHNVDLSKAINLNGVNFNNVDASSLGAAHVGQSASRGRGLGENPDDEEGDAKKKKDGKKAEPKNPRENKLKQPGDRADGQPAGDRADGQPAGDRADGQPAGDRADGQPAGDRADGQPAGDRAAGQPAGDRADGQPAGDRADGQPAGDRAAGQPAGDRAAGQPAGDRADGQPAGDRADGQPAGDRADGQPAGDRAAGQPAGDRAAGQPAGDRAAGQPAGDRAAGQPAGDRAAGQPAGDRAAGQPAGDRAAGQPAGNGAGGQAAGGNAGGQGQNNEGANAPNEKSVKEYLDKVRATVGTEWTPCSVTCGVGVRVRRRVNAANKKPEDLTLNDLETDVCTMDKCAGIFNVVSNSLGLVILLVLALFN</sequence>
<protein>
    <recommendedName>
        <fullName evidence="9">Circumsporozoite protein</fullName>
        <shortName evidence="9">CS</shortName>
    </recommendedName>
    <component>
        <recommendedName>
            <fullName evidence="10">Circumsporozoite protein C-terminus</fullName>
        </recommendedName>
    </component>
</protein>
<organism>
    <name type="scientific">Plasmodium simium</name>
    <dbReference type="NCBI Taxonomy" id="5859"/>
    <lineage>
        <taxon>Eukaryota</taxon>
        <taxon>Sar</taxon>
        <taxon>Alveolata</taxon>
        <taxon>Apicomplexa</taxon>
        <taxon>Aconoidasida</taxon>
        <taxon>Haemosporida</taxon>
        <taxon>Plasmodiidae</taxon>
        <taxon>Plasmodium</taxon>
    </lineage>
</organism>
<proteinExistence type="inferred from homology"/>
<keyword id="KW-1003">Cell membrane</keyword>
<keyword id="KW-0963">Cytoplasm</keyword>
<keyword id="KW-1015">Disulfide bond</keyword>
<keyword id="KW-0325">Glycoprotein</keyword>
<keyword id="KW-0336">GPI-anchor</keyword>
<keyword id="KW-0449">Lipoprotein</keyword>
<keyword id="KW-0461">Malaria</keyword>
<keyword id="KW-0472">Membrane</keyword>
<keyword id="KW-0677">Repeat</keyword>
<keyword id="KW-0732">Signal</keyword>
<keyword id="KW-0748">Sporozoite</keyword>
<evidence type="ECO:0000250" key="1">
    <source>
        <dbReference type="UniProtKB" id="P02893"/>
    </source>
</evidence>
<evidence type="ECO:0000250" key="2">
    <source>
        <dbReference type="UniProtKB" id="P19597"/>
    </source>
</evidence>
<evidence type="ECO:0000250" key="3">
    <source>
        <dbReference type="UniProtKB" id="P23093"/>
    </source>
</evidence>
<evidence type="ECO:0000250" key="4">
    <source>
        <dbReference type="UniProtKB" id="Q7K740"/>
    </source>
</evidence>
<evidence type="ECO:0000255" key="5"/>
<evidence type="ECO:0000255" key="6">
    <source>
        <dbReference type="PROSITE-ProRule" id="PRU00210"/>
    </source>
</evidence>
<evidence type="ECO:0000256" key="7">
    <source>
        <dbReference type="SAM" id="MobiDB-lite"/>
    </source>
</evidence>
<evidence type="ECO:0000269" key="8">
    <source>
    </source>
</evidence>
<evidence type="ECO:0000303" key="9">
    <source>
    </source>
</evidence>
<evidence type="ECO:0000305" key="10"/>
<evidence type="ECO:0000305" key="11">
    <source>
    </source>
</evidence>